<protein>
    <recommendedName>
        <fullName evidence="1">Laccase 1</fullName>
        <ecNumber evidence="9">1.10.3.-</ecNumber>
    </recommendedName>
    <alternativeName>
        <fullName evidence="1">Conidial pigment biosynthesis oxidase Mlac1</fullName>
    </alternativeName>
</protein>
<gene>
    <name evidence="1" type="primary">Mlac1</name>
    <name evidence="7" type="synonym">Abr2</name>
    <name type="ORF">MGU_09381</name>
</gene>
<accession>A0A0B4GLB5</accession>
<name>MLAC1_METGA</name>
<keyword id="KW-0186">Copper</keyword>
<keyword id="KW-0325">Glycoprotein</keyword>
<keyword id="KW-0479">Metal-binding</keyword>
<keyword id="KW-0560">Oxidoreductase</keyword>
<keyword id="KW-0677">Repeat</keyword>
<keyword id="KW-0732">Signal</keyword>
<reference key="1">
    <citation type="journal article" date="2014" name="Proc. Natl. Acad. Sci. U.S.A.">
        <title>Trajectory and genomic determinants of fungal-pathogen speciation and host adaptation.</title>
        <authorList>
            <person name="Hu X."/>
            <person name="Xiao G."/>
            <person name="Zheng P."/>
            <person name="Shang Y."/>
            <person name="Su Y."/>
            <person name="Zhang X."/>
            <person name="Liu X."/>
            <person name="Zhan S."/>
            <person name="St Leger R.J."/>
            <person name="Wang C."/>
        </authorList>
    </citation>
    <scope>NUCLEOTIDE SEQUENCE [LARGE SCALE GENOMIC DNA]</scope>
    <source>
        <strain>ARSEF 977</strain>
    </source>
</reference>
<reference key="2">
    <citation type="journal article" date="2018" name="PLoS Genet.">
        <title>Duplication of a Pks gene cluster and subsequent functional diversification facilitate environmental adaptation in Metarhizium species.</title>
        <authorList>
            <person name="Zeng G."/>
            <person name="Zhang P."/>
            <person name="Zhang Q."/>
            <person name="Zhao H."/>
            <person name="Li Z."/>
            <person name="Zhang X."/>
            <person name="Wang C."/>
            <person name="Yin W.B."/>
            <person name="Fang W."/>
        </authorList>
    </citation>
    <scope>IDENTIFICATION</scope>
    <scope>FUNCTION</scope>
    <scope>PATHWAY</scope>
</reference>
<dbReference type="EC" id="1.10.3.-" evidence="9"/>
<dbReference type="EMBL" id="AZNH01000061">
    <property type="protein sequence ID" value="KID83383.1"/>
    <property type="molecule type" value="Genomic_DNA"/>
</dbReference>
<dbReference type="SMR" id="A0A0B4GLB5"/>
<dbReference type="GlyCosmos" id="A0A0B4GLB5">
    <property type="glycosylation" value="7 sites, No reported glycans"/>
</dbReference>
<dbReference type="HOGENOM" id="CLU_006504_5_0_1"/>
<dbReference type="OrthoDB" id="28at5529"/>
<dbReference type="Proteomes" id="UP000031192">
    <property type="component" value="Unassembled WGS sequence"/>
</dbReference>
<dbReference type="GO" id="GO:0009986">
    <property type="term" value="C:cell surface"/>
    <property type="evidence" value="ECO:0007669"/>
    <property type="project" value="UniProtKB-SubCell"/>
</dbReference>
<dbReference type="GO" id="GO:0005507">
    <property type="term" value="F:copper ion binding"/>
    <property type="evidence" value="ECO:0007669"/>
    <property type="project" value="InterPro"/>
</dbReference>
<dbReference type="GO" id="GO:0016491">
    <property type="term" value="F:oxidoreductase activity"/>
    <property type="evidence" value="ECO:0007669"/>
    <property type="project" value="UniProtKB-KW"/>
</dbReference>
<dbReference type="CDD" id="cd13850">
    <property type="entry name" value="CuRO_1_Abr2_like"/>
    <property type="match status" value="1"/>
</dbReference>
<dbReference type="CDD" id="cd13876">
    <property type="entry name" value="CuRO_2_Abr2_like"/>
    <property type="match status" value="1"/>
</dbReference>
<dbReference type="CDD" id="cd13898">
    <property type="entry name" value="CuRO_3_Abr2_like"/>
    <property type="match status" value="1"/>
</dbReference>
<dbReference type="FunFam" id="2.60.40.420:FF:000036">
    <property type="entry name" value="L-ascorbate oxidase"/>
    <property type="match status" value="1"/>
</dbReference>
<dbReference type="Gene3D" id="2.60.40.420">
    <property type="entry name" value="Cupredoxins - blue copper proteins"/>
    <property type="match status" value="3"/>
</dbReference>
<dbReference type="InterPro" id="IPR011707">
    <property type="entry name" value="Cu-oxidase-like_N"/>
</dbReference>
<dbReference type="InterPro" id="IPR001117">
    <property type="entry name" value="Cu-oxidase_2nd"/>
</dbReference>
<dbReference type="InterPro" id="IPR011706">
    <property type="entry name" value="Cu-oxidase_C"/>
</dbReference>
<dbReference type="InterPro" id="IPR045087">
    <property type="entry name" value="Cu-oxidase_fam"/>
</dbReference>
<dbReference type="InterPro" id="IPR033138">
    <property type="entry name" value="Cu_oxidase_CS"/>
</dbReference>
<dbReference type="InterPro" id="IPR002355">
    <property type="entry name" value="Cu_oxidase_Cu_BS"/>
</dbReference>
<dbReference type="InterPro" id="IPR008972">
    <property type="entry name" value="Cupredoxin"/>
</dbReference>
<dbReference type="PANTHER" id="PTHR11709:SF488">
    <property type="entry name" value="LACCASE-RELATED"/>
    <property type="match status" value="1"/>
</dbReference>
<dbReference type="PANTHER" id="PTHR11709">
    <property type="entry name" value="MULTI-COPPER OXIDASE"/>
    <property type="match status" value="1"/>
</dbReference>
<dbReference type="Pfam" id="PF00394">
    <property type="entry name" value="Cu-oxidase"/>
    <property type="match status" value="1"/>
</dbReference>
<dbReference type="Pfam" id="PF07731">
    <property type="entry name" value="Cu-oxidase_2"/>
    <property type="match status" value="1"/>
</dbReference>
<dbReference type="Pfam" id="PF07732">
    <property type="entry name" value="Cu-oxidase_3"/>
    <property type="match status" value="1"/>
</dbReference>
<dbReference type="SUPFAM" id="SSF49503">
    <property type="entry name" value="Cupredoxins"/>
    <property type="match status" value="3"/>
</dbReference>
<dbReference type="PROSITE" id="PS00079">
    <property type="entry name" value="MULTICOPPER_OXIDASE1"/>
    <property type="match status" value="1"/>
</dbReference>
<dbReference type="PROSITE" id="PS00080">
    <property type="entry name" value="MULTICOPPER_OXIDASE2"/>
    <property type="match status" value="1"/>
</dbReference>
<organism>
    <name type="scientific">Metarhizium guizhouense (strain ARSEF 977)</name>
    <dbReference type="NCBI Taxonomy" id="1276136"/>
    <lineage>
        <taxon>Eukaryota</taxon>
        <taxon>Fungi</taxon>
        <taxon>Dikarya</taxon>
        <taxon>Ascomycota</taxon>
        <taxon>Pezizomycotina</taxon>
        <taxon>Sordariomycetes</taxon>
        <taxon>Hypocreomycetidae</taxon>
        <taxon>Hypocreales</taxon>
        <taxon>Clavicipitaceae</taxon>
        <taxon>Metarhizium</taxon>
    </lineage>
</organism>
<feature type="signal peptide" evidence="4">
    <location>
        <begin position="1"/>
        <end position="20"/>
    </location>
</feature>
<feature type="chain" id="PRO_5002103351" description="Laccase 1">
    <location>
        <begin position="21"/>
        <end position="613"/>
    </location>
</feature>
<feature type="domain" description="Plastocyanin-like 1" evidence="4">
    <location>
        <begin position="29"/>
        <end position="142"/>
    </location>
</feature>
<feature type="domain" description="Plastocyanin-like 2" evidence="4">
    <location>
        <begin position="171"/>
        <end position="359"/>
    </location>
</feature>
<feature type="domain" description="Plastocyanin-like 3" evidence="4">
    <location>
        <begin position="468"/>
        <end position="598"/>
    </location>
</feature>
<feature type="binding site" evidence="3">
    <location>
        <position position="78"/>
    </location>
    <ligand>
        <name>Cu cation</name>
        <dbReference type="ChEBI" id="CHEBI:23378"/>
        <label>1</label>
    </ligand>
</feature>
<feature type="binding site" evidence="3">
    <location>
        <position position="80"/>
    </location>
    <ligand>
        <name>Cu cation</name>
        <dbReference type="ChEBI" id="CHEBI:23378"/>
        <label>2</label>
    </ligand>
</feature>
<feature type="binding site" evidence="3">
    <location>
        <position position="122"/>
    </location>
    <ligand>
        <name>Cu cation</name>
        <dbReference type="ChEBI" id="CHEBI:23378"/>
        <label>2</label>
    </ligand>
</feature>
<feature type="binding site" evidence="3">
    <location>
        <position position="124"/>
    </location>
    <ligand>
        <name>Cu cation</name>
        <dbReference type="ChEBI" id="CHEBI:23378"/>
        <label>3</label>
    </ligand>
</feature>
<feature type="binding site" evidence="3">
    <location>
        <position position="506"/>
    </location>
    <ligand>
        <name>Cu cation</name>
        <dbReference type="ChEBI" id="CHEBI:23378"/>
        <label>4</label>
    </ligand>
</feature>
<feature type="binding site" evidence="3">
    <location>
        <position position="509"/>
    </location>
    <ligand>
        <name>Cu cation</name>
        <dbReference type="ChEBI" id="CHEBI:23378"/>
        <label>1</label>
    </ligand>
</feature>
<feature type="binding site" evidence="3">
    <location>
        <position position="509"/>
    </location>
    <ligand>
        <name>Cu cation</name>
        <dbReference type="ChEBI" id="CHEBI:23378"/>
        <label>4</label>
    </ligand>
</feature>
<feature type="binding site" evidence="3">
    <location>
        <position position="511"/>
    </location>
    <ligand>
        <name>Cu cation</name>
        <dbReference type="ChEBI" id="CHEBI:23378"/>
        <label>3</label>
    </ligand>
</feature>
<feature type="binding site" evidence="3">
    <location>
        <position position="580"/>
    </location>
    <ligand>
        <name>Cu cation</name>
        <dbReference type="ChEBI" id="CHEBI:23378"/>
        <label>3</label>
    </ligand>
</feature>
<feature type="binding site" evidence="3">
    <location>
        <position position="581"/>
    </location>
    <ligand>
        <name>Cu cation</name>
        <dbReference type="ChEBI" id="CHEBI:23378"/>
        <label>4</label>
    </ligand>
</feature>
<feature type="binding site" evidence="3">
    <location>
        <position position="582"/>
    </location>
    <ligand>
        <name>Cu cation</name>
        <dbReference type="ChEBI" id="CHEBI:23378"/>
        <label>2</label>
    </ligand>
</feature>
<feature type="binding site" evidence="3">
    <location>
        <position position="586"/>
    </location>
    <ligand>
        <name>Cu cation</name>
        <dbReference type="ChEBI" id="CHEBI:23378"/>
        <label>4</label>
    </ligand>
</feature>
<feature type="glycosylation site" description="N-linked (GlcNAc...) asparagine" evidence="5">
    <location>
        <position position="74"/>
    </location>
</feature>
<feature type="glycosylation site" description="N-linked (GlcNAc...) asparagine" evidence="5">
    <location>
        <position position="256"/>
    </location>
</feature>
<feature type="glycosylation site" description="N-linked (GlcNAc...) asparagine" evidence="5">
    <location>
        <position position="279"/>
    </location>
</feature>
<feature type="glycosylation site" description="N-linked (GlcNAc...) asparagine" evidence="5">
    <location>
        <position position="444"/>
    </location>
</feature>
<feature type="glycosylation site" description="N-linked (GlcNAc...) asparagine" evidence="5">
    <location>
        <position position="468"/>
    </location>
</feature>
<feature type="glycosylation site" description="N-linked (GlcNAc...) asparagine" evidence="5">
    <location>
        <position position="484"/>
    </location>
</feature>
<feature type="glycosylation site" description="N-linked (GlcNAc...) asparagine" evidence="5">
    <location>
        <position position="526"/>
    </location>
</feature>
<proteinExistence type="inferred from homology"/>
<sequence>MSRFARLLLIVALFFTGAWAKTVKETLRITWKEGAPNGQARELIYTNGQFPSPTLVWDEDDDIEITVYNEMAKNVTVHWHGLDQKDTPWSDGTPGLSQRPIQPGNKFVYKFKASPPGNHWYHSHEKMSLVDGLYGAIHIRPKGDRTGLWSQISQDKDDIKAMENAAHDPEYLVVSDWSQYTSEEYWKISTDSGLLVFCLDSILVNGKGEVYCPGQKFLQAELAPGLVEDAFPPGTEVSDKGCFPADLDQVQGGPWNITKRPDLIPPRVQEGCVASRHENATIVVDPSRNNGWVSMHIVAAATIAQITFSVDSHEFWLYEIDGNYVNPRKFVSAVMSAGETFSVMIKLDQKPGRYTMRIPNSGASQVLGGFAEMVYKGCESEEKTGKAYLSYGGNPTSPDVEKNSFFPWQLDTDHMSPWPPNKPRPGNADEEHLLVLGRVGAPYNYTMNTKYLYPVDFQNDDPLLFYPNATRDTENDGLVLRTKNGSWVDLILQVSTLPGDTSSFEHFMHKHGSKTWRIGFGAGVWNYTSVEEAIKERPKDFNLETPGLRDTWITAFSIGGEAYWSVFRYFVDNPGPWLFHCHIELHLMGGMGIAILDGVDAWPEHIPEEYQLC</sequence>
<evidence type="ECO:0000250" key="1">
    <source>
        <dbReference type="UniProtKB" id="E9F648"/>
    </source>
</evidence>
<evidence type="ECO:0000250" key="2">
    <source>
        <dbReference type="UniProtKB" id="E9RBR0"/>
    </source>
</evidence>
<evidence type="ECO:0000250" key="3">
    <source>
        <dbReference type="UniProtKB" id="Q70KY3"/>
    </source>
</evidence>
<evidence type="ECO:0000255" key="4"/>
<evidence type="ECO:0000255" key="5">
    <source>
        <dbReference type="PROSITE-ProRule" id="PRU00498"/>
    </source>
</evidence>
<evidence type="ECO:0000269" key="6">
    <source>
    </source>
</evidence>
<evidence type="ECO:0000303" key="7">
    <source>
    </source>
</evidence>
<evidence type="ECO:0000305" key="8"/>
<evidence type="ECO:0000305" key="9">
    <source>
    </source>
</evidence>
<comment type="function">
    <text evidence="6 9">Laccase; part of the Pks1 gene cluster that mediates the biosynthesis of an anthraquinone derivative pigment that contributes to conidial pigmentation that provides protection from UV radiation, heat and cold stress (PubMed:29958281). The polyketide synthase Pks1 produces 1-acetyl-2,4,6,8-tetrahydroxy-9,10-anthraquinone though condensation of acetyl-CoA with malonyl-CoA (Probable). The dehydratase EthD and the laccase Mlac1 further convert the anthraquinone derivative into the final conidial pigment (Probable).</text>
</comment>
<comment type="cofactor">
    <cofactor evidence="3">
        <name>Cu cation</name>
        <dbReference type="ChEBI" id="CHEBI:23378"/>
    </cofactor>
    <text evidence="3">Binds 4 Cu cations per monomer.</text>
</comment>
<comment type="pathway">
    <text evidence="9">Pigment biosynthesis.</text>
</comment>
<comment type="subcellular location">
    <subcellularLocation>
        <location evidence="2">Cell surface</location>
    </subcellularLocation>
</comment>
<comment type="similarity">
    <text evidence="8">Belongs to the multicopper oxidase family.</text>
</comment>